<dbReference type="EC" id="2.7.7.89" evidence="1"/>
<dbReference type="EC" id="2.7.7.42" evidence="1"/>
<dbReference type="EMBL" id="CP000802">
    <property type="protein sequence ID" value="ABV07461.1"/>
    <property type="molecule type" value="Genomic_DNA"/>
</dbReference>
<dbReference type="RefSeq" id="WP_001353906.1">
    <property type="nucleotide sequence ID" value="NC_009800.1"/>
</dbReference>
<dbReference type="SMR" id="A8A4K7"/>
<dbReference type="KEGG" id="ecx:EcHS_A3230"/>
<dbReference type="HOGENOM" id="CLU_006233_0_1_6"/>
<dbReference type="GO" id="GO:0005829">
    <property type="term" value="C:cytosol"/>
    <property type="evidence" value="ECO:0007669"/>
    <property type="project" value="TreeGrafter"/>
</dbReference>
<dbReference type="GO" id="GO:0008882">
    <property type="term" value="F:[glutamate-ammonia-ligase] adenylyltransferase activity"/>
    <property type="evidence" value="ECO:0007669"/>
    <property type="project" value="UniProtKB-UniRule"/>
</dbReference>
<dbReference type="GO" id="GO:0047388">
    <property type="term" value="F:[glutamine synthetase]-adenylyl-L-tyrosine phosphorylase activity"/>
    <property type="evidence" value="ECO:0007669"/>
    <property type="project" value="UniProtKB-EC"/>
</dbReference>
<dbReference type="GO" id="GO:0005524">
    <property type="term" value="F:ATP binding"/>
    <property type="evidence" value="ECO:0007669"/>
    <property type="project" value="UniProtKB-UniRule"/>
</dbReference>
<dbReference type="GO" id="GO:0000287">
    <property type="term" value="F:magnesium ion binding"/>
    <property type="evidence" value="ECO:0007669"/>
    <property type="project" value="UniProtKB-UniRule"/>
</dbReference>
<dbReference type="GO" id="GO:0000820">
    <property type="term" value="P:regulation of glutamine family amino acid metabolic process"/>
    <property type="evidence" value="ECO:0007669"/>
    <property type="project" value="UniProtKB-UniRule"/>
</dbReference>
<dbReference type="CDD" id="cd05401">
    <property type="entry name" value="NT_GlnE_GlnD_like"/>
    <property type="match status" value="2"/>
</dbReference>
<dbReference type="FunFam" id="1.10.4050.10:FF:000001">
    <property type="entry name" value="Bifunctional glutamine synthetase adenylyltransferase/adenylyl-removing enzyme"/>
    <property type="match status" value="1"/>
</dbReference>
<dbReference type="FunFam" id="1.20.120.1510:FF:000001">
    <property type="entry name" value="Bifunctional glutamine synthetase adenylyltransferase/adenylyl-removing enzyme"/>
    <property type="match status" value="1"/>
</dbReference>
<dbReference type="FunFam" id="1.20.120.330:FF:000005">
    <property type="entry name" value="Bifunctional glutamine synthetase adenylyltransferase/adenylyl-removing enzyme"/>
    <property type="match status" value="1"/>
</dbReference>
<dbReference type="FunFam" id="1.20.120.330:FF:000008">
    <property type="entry name" value="Bifunctional glutamine synthetase adenylyltransferase/adenylyl-removing enzyme"/>
    <property type="match status" value="1"/>
</dbReference>
<dbReference type="FunFam" id="3.30.460.10:FF:000009">
    <property type="entry name" value="Bifunctional glutamine synthetase adenylyltransferase/adenylyl-removing enzyme"/>
    <property type="match status" value="1"/>
</dbReference>
<dbReference type="FunFam" id="3.30.460.10:FF:000014">
    <property type="entry name" value="Bifunctional glutamine synthetase adenylyltransferase/adenylyl-removing enzyme"/>
    <property type="match status" value="1"/>
</dbReference>
<dbReference type="Gene3D" id="1.20.120.1510">
    <property type="match status" value="1"/>
</dbReference>
<dbReference type="Gene3D" id="3.30.460.10">
    <property type="entry name" value="Beta Polymerase, domain 2"/>
    <property type="match status" value="2"/>
</dbReference>
<dbReference type="Gene3D" id="1.10.4050.10">
    <property type="entry name" value="Glutamine synthase adenylyltransferase GlnE"/>
    <property type="match status" value="1"/>
</dbReference>
<dbReference type="Gene3D" id="1.20.120.330">
    <property type="entry name" value="Nucleotidyltransferases domain 2"/>
    <property type="match status" value="2"/>
</dbReference>
<dbReference type="HAMAP" id="MF_00802">
    <property type="entry name" value="GlnE"/>
    <property type="match status" value="1"/>
</dbReference>
<dbReference type="InterPro" id="IPR023057">
    <property type="entry name" value="GlnE"/>
</dbReference>
<dbReference type="InterPro" id="IPR005190">
    <property type="entry name" value="GlnE_rpt_dom"/>
</dbReference>
<dbReference type="InterPro" id="IPR043519">
    <property type="entry name" value="NT_sf"/>
</dbReference>
<dbReference type="InterPro" id="IPR013546">
    <property type="entry name" value="PII_UdlTrfase/GS_AdlTrfase"/>
</dbReference>
<dbReference type="NCBIfam" id="NF008292">
    <property type="entry name" value="PRK11072.1"/>
    <property type="match status" value="1"/>
</dbReference>
<dbReference type="PANTHER" id="PTHR30621:SF0">
    <property type="entry name" value="BIFUNCTIONAL GLUTAMINE SYNTHETASE ADENYLYLTRANSFERASE_ADENYLYL-REMOVING ENZYME"/>
    <property type="match status" value="1"/>
</dbReference>
<dbReference type="PANTHER" id="PTHR30621">
    <property type="entry name" value="GLUTAMINE SYNTHETASE ADENYLYLTRANSFERASE"/>
    <property type="match status" value="1"/>
</dbReference>
<dbReference type="Pfam" id="PF08335">
    <property type="entry name" value="GlnD_UR_UTase"/>
    <property type="match status" value="2"/>
</dbReference>
<dbReference type="Pfam" id="PF03710">
    <property type="entry name" value="GlnE"/>
    <property type="match status" value="2"/>
</dbReference>
<dbReference type="SUPFAM" id="SSF81301">
    <property type="entry name" value="Nucleotidyltransferase"/>
    <property type="match status" value="2"/>
</dbReference>
<dbReference type="SUPFAM" id="SSF81593">
    <property type="entry name" value="Nucleotidyltransferase substrate binding subunit/domain"/>
    <property type="match status" value="2"/>
</dbReference>
<reference key="1">
    <citation type="journal article" date="2008" name="J. Bacteriol.">
        <title>The pangenome structure of Escherichia coli: comparative genomic analysis of E. coli commensal and pathogenic isolates.</title>
        <authorList>
            <person name="Rasko D.A."/>
            <person name="Rosovitz M.J."/>
            <person name="Myers G.S.A."/>
            <person name="Mongodin E.F."/>
            <person name="Fricke W.F."/>
            <person name="Gajer P."/>
            <person name="Crabtree J."/>
            <person name="Sebaihia M."/>
            <person name="Thomson N.R."/>
            <person name="Chaudhuri R."/>
            <person name="Henderson I.R."/>
            <person name="Sperandio V."/>
            <person name="Ravel J."/>
        </authorList>
    </citation>
    <scope>NUCLEOTIDE SEQUENCE [LARGE SCALE GENOMIC DNA]</scope>
    <source>
        <strain>HS</strain>
    </source>
</reference>
<sequence length="946" mass="108388">MKPLSSPLQQYWQTVVERLPEPLAEESLSAQAKSVLTFSDFVQDSVIAHPEWLTELESQPPQADEWQHYAAWLQEALCNVSDEAGLMRELRLFRRRIMVRIAWAQTLALVTEESILQQLSYLAETLIVAARDWLYDACCREWGTPCNAQGEAQPLLILGMGKLGGGELNFSSDIDLIFAWPEHGCTQGGRRELDNAQFFTRMGQRLIKVLDQPTQDGFVYRVDMRLRPFGESGPLVLSFAALEDYYQEQGRDWERYAMVKARIMGDSEGVYANELRAMLRPFVFRRYIDFSVIQSLRNMKGMIAREVRRRGLTDNIKLGAGGIREIEFIVQVFQLIRGGREPSLQSRSLLPTLSVIAALHLLSENDAEQLRVAYLFLRRLENLLQSINDEQTQTLPSDELNRARLAWAMDFADWPQLTGALTAHMTNVRRVFNELIGDDESETQEESLSEQWRELWQDALQEDDTTPVLAHLSEDDRKQVLTLIADFRKELDKRTIGPRGRQVLDHLMPHLLSDVCAREDAAVTLSRITALLVGIVTRTTYLELLSEFPAALKHLISLCAASPMIASQLARYPLLLDELLDPNTLYQPTATDAYRDELRQYLLRVPEDDEEQQLEALRQFKQAQLLRIAAADIAGTLPVMKVSDHLTWLAEAMIDAVVQQAWVQMVARYGKPNHLNEREGRGFAVVGYGKLGGWELGYSSDLDLIFLHDCPMDAMTDGEREIDGRQFYLRLAQRIMHLFSTRTSSGILYEVDARLRPSGAAGMLVTSAEAFADYQKNEAWTWEHQALVRARVVYGDPQLTAHFDAVRREIMTLPREGKTLQTEVREMREKMRAHLGNKHRDRFDIKADEGGITDIEFITQYLVLRYAHEKPKLTRWSDNVRILELLAQNDIMEEQEAMALTRAYTTLRDELHHLALQELPGHVSEDCFTAERELVRASWQKWLVEE</sequence>
<accession>A8A4K7</accession>
<comment type="function">
    <text evidence="1">Involved in the regulation of glutamine synthetase GlnA, a key enzyme in the process to assimilate ammonia. When cellular nitrogen levels are high, the C-terminal adenylyl transferase (AT) inactivates GlnA by covalent transfer of an adenylyl group from ATP to specific tyrosine residue of GlnA, thus reducing its activity. Conversely, when nitrogen levels are low, the N-terminal adenylyl removase (AR) activates GlnA by removing the adenylyl group by phosphorolysis, increasing its activity. The regulatory region of GlnE binds the signal transduction protein PII (GlnB) which indicates the nitrogen status of the cell.</text>
</comment>
<comment type="catalytic activity">
    <reaction evidence="1">
        <text>[glutamine synthetase]-O(4)-(5'-adenylyl)-L-tyrosine + phosphate = [glutamine synthetase]-L-tyrosine + ADP</text>
        <dbReference type="Rhea" id="RHEA:43716"/>
        <dbReference type="Rhea" id="RHEA-COMP:10660"/>
        <dbReference type="Rhea" id="RHEA-COMP:10661"/>
        <dbReference type="ChEBI" id="CHEBI:43474"/>
        <dbReference type="ChEBI" id="CHEBI:46858"/>
        <dbReference type="ChEBI" id="CHEBI:83624"/>
        <dbReference type="ChEBI" id="CHEBI:456216"/>
        <dbReference type="EC" id="2.7.7.89"/>
    </reaction>
</comment>
<comment type="catalytic activity">
    <reaction evidence="1">
        <text>[glutamine synthetase]-L-tyrosine + ATP = [glutamine synthetase]-O(4)-(5'-adenylyl)-L-tyrosine + diphosphate</text>
        <dbReference type="Rhea" id="RHEA:18589"/>
        <dbReference type="Rhea" id="RHEA-COMP:10660"/>
        <dbReference type="Rhea" id="RHEA-COMP:10661"/>
        <dbReference type="ChEBI" id="CHEBI:30616"/>
        <dbReference type="ChEBI" id="CHEBI:33019"/>
        <dbReference type="ChEBI" id="CHEBI:46858"/>
        <dbReference type="ChEBI" id="CHEBI:83624"/>
        <dbReference type="EC" id="2.7.7.42"/>
    </reaction>
</comment>
<comment type="cofactor">
    <cofactor evidence="1">
        <name>Mg(2+)</name>
        <dbReference type="ChEBI" id="CHEBI:18420"/>
    </cofactor>
</comment>
<comment type="similarity">
    <text evidence="1">Belongs to the GlnE family.</text>
</comment>
<keyword id="KW-0067">ATP-binding</keyword>
<keyword id="KW-0460">Magnesium</keyword>
<keyword id="KW-0511">Multifunctional enzyme</keyword>
<keyword id="KW-0547">Nucleotide-binding</keyword>
<keyword id="KW-0548">Nucleotidyltransferase</keyword>
<keyword id="KW-0808">Transferase</keyword>
<gene>
    <name evidence="1" type="primary">glnE</name>
    <name type="ordered locus">EcHS_A3230</name>
</gene>
<evidence type="ECO:0000255" key="1">
    <source>
        <dbReference type="HAMAP-Rule" id="MF_00802"/>
    </source>
</evidence>
<organism>
    <name type="scientific">Escherichia coli O9:H4 (strain HS)</name>
    <dbReference type="NCBI Taxonomy" id="331112"/>
    <lineage>
        <taxon>Bacteria</taxon>
        <taxon>Pseudomonadati</taxon>
        <taxon>Pseudomonadota</taxon>
        <taxon>Gammaproteobacteria</taxon>
        <taxon>Enterobacterales</taxon>
        <taxon>Enterobacteriaceae</taxon>
        <taxon>Escherichia</taxon>
    </lineage>
</organism>
<protein>
    <recommendedName>
        <fullName evidence="1">Bifunctional glutamine synthetase adenylyltransferase/adenylyl-removing enzyme</fullName>
    </recommendedName>
    <alternativeName>
        <fullName evidence="1">ATP:glutamine synthetase adenylyltransferase</fullName>
    </alternativeName>
    <alternativeName>
        <fullName evidence="1">ATase</fullName>
    </alternativeName>
    <domain>
        <recommendedName>
            <fullName evidence="1">Glutamine synthetase adenylyl-L-tyrosine phosphorylase</fullName>
            <ecNumber evidence="1">2.7.7.89</ecNumber>
        </recommendedName>
        <alternativeName>
            <fullName evidence="1">Adenylyl removase</fullName>
            <shortName evidence="1">AR</shortName>
            <shortName evidence="1">AT-N</shortName>
        </alternativeName>
    </domain>
    <domain>
        <recommendedName>
            <fullName evidence="1">Glutamine synthetase adenylyl transferase</fullName>
            <ecNumber evidence="1">2.7.7.42</ecNumber>
        </recommendedName>
        <alternativeName>
            <fullName evidence="1">Adenylyl transferase</fullName>
            <shortName evidence="1">AT</shortName>
            <shortName evidence="1">AT-C</shortName>
        </alternativeName>
    </domain>
</protein>
<name>GLNE_ECOHS</name>
<feature type="chain" id="PRO_1000062265" description="Bifunctional glutamine synthetase adenylyltransferase/adenylyl-removing enzyme">
    <location>
        <begin position="1"/>
        <end position="946"/>
    </location>
</feature>
<feature type="region of interest" description="Adenylyl removase" evidence="1">
    <location>
        <begin position="1"/>
        <end position="440"/>
    </location>
</feature>
<feature type="region of interest" description="Adenylyl transferase" evidence="1">
    <location>
        <begin position="449"/>
        <end position="946"/>
    </location>
</feature>
<proteinExistence type="inferred from homology"/>